<reference key="1">
    <citation type="journal article" date="2007" name="PLoS ONE">
        <title>Patterns of genome evolution among the microsporidian parasites Encephalitozoon cuniculi, Antonospora locustae and Enterocytozoon bieneusi.</title>
        <authorList>
            <person name="Corradi N."/>
            <person name="Akiyoshi D.E."/>
            <person name="Morrison H.G."/>
            <person name="Feng X."/>
            <person name="Weiss L.M."/>
            <person name="Tzipori S."/>
            <person name="Keeling P.J."/>
        </authorList>
    </citation>
    <scope>NUCLEOTIDE SEQUENCE [LARGE SCALE GENOMIC DNA]</scope>
    <source>
        <strain>H348</strain>
    </source>
</reference>
<reference key="2">
    <citation type="journal article" date="2009" name="PLoS Pathog.">
        <title>Genomic survey of the non-cultivatable opportunistic human pathogen, Enterocytozoon bieneusi.</title>
        <authorList>
            <person name="Akiyoshi D.E."/>
            <person name="Morrison H.G."/>
            <person name="Lei S."/>
            <person name="Feng X."/>
            <person name="Zhang Q."/>
            <person name="Corradi N."/>
            <person name="Mayanja H."/>
            <person name="Tumwine J.K."/>
            <person name="Keeling P.J."/>
            <person name="Weiss L.M."/>
            <person name="Tzipori S."/>
        </authorList>
    </citation>
    <scope>NUCLEOTIDE SEQUENCE [LARGE SCALE GENOMIC DNA]</scope>
    <source>
        <strain>H348</strain>
    </source>
</reference>
<evidence type="ECO:0000250" key="1"/>
<evidence type="ECO:0000305" key="2"/>
<dbReference type="EC" id="6.1.1.22"/>
<dbReference type="EMBL" id="ABGB01000005">
    <property type="protein sequence ID" value="EDQ31040.1"/>
    <property type="molecule type" value="Genomic_DNA"/>
</dbReference>
<dbReference type="RefSeq" id="XP_001827945.1">
    <property type="nucleotide sequence ID" value="XM_001827893.1"/>
</dbReference>
<dbReference type="SMR" id="A9CTP8"/>
<dbReference type="FunCoup" id="A9CTP8">
    <property type="interactions" value="253"/>
</dbReference>
<dbReference type="STRING" id="481877.A9CTP8"/>
<dbReference type="VEuPathDB" id="MicrosporidiaDB:EBI_22533"/>
<dbReference type="HOGENOM" id="CLU_004553_2_10_1"/>
<dbReference type="InParanoid" id="A9CTP8"/>
<dbReference type="OMA" id="DCCLYPR"/>
<dbReference type="OrthoDB" id="1931232at2759"/>
<dbReference type="GO" id="GO:0005737">
    <property type="term" value="C:cytoplasm"/>
    <property type="evidence" value="ECO:0007669"/>
    <property type="project" value="UniProtKB-SubCell"/>
</dbReference>
<dbReference type="GO" id="GO:0004816">
    <property type="term" value="F:asparagine-tRNA ligase activity"/>
    <property type="evidence" value="ECO:0007669"/>
    <property type="project" value="UniProtKB-EC"/>
</dbReference>
<dbReference type="GO" id="GO:0005524">
    <property type="term" value="F:ATP binding"/>
    <property type="evidence" value="ECO:0007669"/>
    <property type="project" value="UniProtKB-KW"/>
</dbReference>
<dbReference type="GO" id="GO:0006421">
    <property type="term" value="P:asparaginyl-tRNA aminoacylation"/>
    <property type="evidence" value="ECO:0007669"/>
    <property type="project" value="InterPro"/>
</dbReference>
<dbReference type="Gene3D" id="3.30.930.10">
    <property type="entry name" value="Bira Bifunctional Protein, Domain 2"/>
    <property type="match status" value="1"/>
</dbReference>
<dbReference type="Gene3D" id="2.40.50.140">
    <property type="entry name" value="Nucleic acid-binding proteins"/>
    <property type="match status" value="1"/>
</dbReference>
<dbReference type="InterPro" id="IPR004364">
    <property type="entry name" value="Aa-tRNA-synt_II"/>
</dbReference>
<dbReference type="InterPro" id="IPR006195">
    <property type="entry name" value="aa-tRNA-synth_II"/>
</dbReference>
<dbReference type="InterPro" id="IPR045864">
    <property type="entry name" value="aa-tRNA-synth_II/BPL/LPL"/>
</dbReference>
<dbReference type="InterPro" id="IPR004522">
    <property type="entry name" value="Asn-tRNA-ligase"/>
</dbReference>
<dbReference type="InterPro" id="IPR002312">
    <property type="entry name" value="Asp/Asn-tRNA-synth_IIb"/>
</dbReference>
<dbReference type="InterPro" id="IPR012340">
    <property type="entry name" value="NA-bd_OB-fold"/>
</dbReference>
<dbReference type="NCBIfam" id="TIGR00457">
    <property type="entry name" value="asnS"/>
    <property type="match status" value="1"/>
</dbReference>
<dbReference type="PANTHER" id="PTHR22594:SF16">
    <property type="entry name" value="ASPARAGINE--TRNA LIGASE, CYTOPLASMIC"/>
    <property type="match status" value="1"/>
</dbReference>
<dbReference type="PANTHER" id="PTHR22594">
    <property type="entry name" value="ASPARTYL/LYSYL-TRNA SYNTHETASE"/>
    <property type="match status" value="1"/>
</dbReference>
<dbReference type="Pfam" id="PF00152">
    <property type="entry name" value="tRNA-synt_2"/>
    <property type="match status" value="1"/>
</dbReference>
<dbReference type="PRINTS" id="PR01042">
    <property type="entry name" value="TRNASYNTHASP"/>
</dbReference>
<dbReference type="SUPFAM" id="SSF55681">
    <property type="entry name" value="Class II aaRS and biotin synthetases"/>
    <property type="match status" value="1"/>
</dbReference>
<dbReference type="SUPFAM" id="SSF50249">
    <property type="entry name" value="Nucleic acid-binding proteins"/>
    <property type="match status" value="1"/>
</dbReference>
<dbReference type="PROSITE" id="PS50862">
    <property type="entry name" value="AA_TRNA_LIGASE_II"/>
    <property type="match status" value="1"/>
</dbReference>
<comment type="catalytic activity">
    <reaction>
        <text>tRNA(Asn) + L-asparagine + ATP = L-asparaginyl-tRNA(Asn) + AMP + diphosphate + H(+)</text>
        <dbReference type="Rhea" id="RHEA:11180"/>
        <dbReference type="Rhea" id="RHEA-COMP:9659"/>
        <dbReference type="Rhea" id="RHEA-COMP:9674"/>
        <dbReference type="ChEBI" id="CHEBI:15378"/>
        <dbReference type="ChEBI" id="CHEBI:30616"/>
        <dbReference type="ChEBI" id="CHEBI:33019"/>
        <dbReference type="ChEBI" id="CHEBI:58048"/>
        <dbReference type="ChEBI" id="CHEBI:78442"/>
        <dbReference type="ChEBI" id="CHEBI:78515"/>
        <dbReference type="ChEBI" id="CHEBI:456215"/>
        <dbReference type="EC" id="6.1.1.22"/>
    </reaction>
</comment>
<comment type="subcellular location">
    <subcellularLocation>
        <location evidence="1">Cytoplasm</location>
    </subcellularLocation>
</comment>
<comment type="similarity">
    <text evidence="2">Belongs to the class-II aminoacyl-tRNA synthetase family.</text>
</comment>
<organism>
    <name type="scientific">Enterocytozoon bieneusi (strain H348)</name>
    <name type="common">Microsporidian parasite</name>
    <dbReference type="NCBI Taxonomy" id="481877"/>
    <lineage>
        <taxon>Eukaryota</taxon>
        <taxon>Fungi</taxon>
        <taxon>Fungi incertae sedis</taxon>
        <taxon>Microsporidia</taxon>
        <taxon>Enterocytozoonidae</taxon>
        <taxon>Enterocytozoon</taxon>
    </lineage>
</organism>
<name>SYNC_ENTBH</name>
<sequence>MKLQDNLKSIKKELERIKVENWSKENIDKNTYRYIRLFDIDDSLMNQKICFFGWVKSSRSSSKISFIELISQFKIIKCVIPTKVKLTDHTTLKVWGIMKPNNGNDEHQFEIDVQAYEVYGGYQAPSFPLNIHSDKDTLLDLAHLGLRMPHRILFLQAQNELLKALRKFYWNNNYTEITPPTLVQTQVEGGATLFKLNYYDQPAYLTQSSQLYLETVAPVVGKAFCIMPSYRAEKSKTSRHLSEFTHVEAELVDIQFDELMDQIEQLIRSTINEFYKNILPEIKKIDNDFQPVVLSDKQFKKITYEDAIHFLIAQNHKKTDNTDYQLGDDISDASEKFLLETYGENQPIFLIRFPTDHKPFYVAKDQYGTQTCDLLFPGIGEIVGGSMRETNYNNLLDGFKRENIDHEPYSWYLDMAKFGPSPHGGYGLGFERLLMCLMKYKSVDQSTLYCRKPSRCTP</sequence>
<gene>
    <name type="ORF">EBI_22533</name>
</gene>
<feature type="chain" id="PRO_0000388389" description="Probable asparagine--tRNA ligase, cytoplasmic">
    <location>
        <begin position="1"/>
        <end position="458"/>
    </location>
</feature>
<protein>
    <recommendedName>
        <fullName>Probable asparagine--tRNA ligase, cytoplasmic</fullName>
        <ecNumber>6.1.1.22</ecNumber>
    </recommendedName>
    <alternativeName>
        <fullName>Asparaginyl-tRNA synthetase</fullName>
        <shortName>AsnRS</shortName>
    </alternativeName>
</protein>
<proteinExistence type="inferred from homology"/>
<keyword id="KW-0030">Aminoacyl-tRNA synthetase</keyword>
<keyword id="KW-0067">ATP-binding</keyword>
<keyword id="KW-0963">Cytoplasm</keyword>
<keyword id="KW-0436">Ligase</keyword>
<keyword id="KW-0547">Nucleotide-binding</keyword>
<keyword id="KW-0648">Protein biosynthesis</keyword>
<accession>A9CTP8</accession>